<sequence length="207" mass="22479">MIGYLQGSLAGVRKQSGRLLLLLDVQGVGYEVQTPARSLVELPAAGQSLQVFTHLQVREDQWLLFGFLQMAERDLFRQLISVSGIGPQLGLALLDSLSLAELVQAIVAGNTRLLSRTPGVGAKTAERLALELRSKLAEWREEAGLLPSATAAPIAAVQEDVEMTLLALGYNNREILQALTAIAQENLVQSGQPAEDWIREAIAWLSR</sequence>
<reference key="1">
    <citation type="submission" date="2005-08" db="EMBL/GenBank/DDBJ databases">
        <title>Complete sequence of chromosome 1 of Synechococcus elongatus PCC 7942.</title>
        <authorList>
            <consortium name="US DOE Joint Genome Institute"/>
            <person name="Copeland A."/>
            <person name="Lucas S."/>
            <person name="Lapidus A."/>
            <person name="Barry K."/>
            <person name="Detter J.C."/>
            <person name="Glavina T."/>
            <person name="Hammon N."/>
            <person name="Israni S."/>
            <person name="Pitluck S."/>
            <person name="Schmutz J."/>
            <person name="Larimer F."/>
            <person name="Land M."/>
            <person name="Kyrpides N."/>
            <person name="Lykidis A."/>
            <person name="Golden S."/>
            <person name="Richardson P."/>
        </authorList>
    </citation>
    <scope>NUCLEOTIDE SEQUENCE [LARGE SCALE GENOMIC DNA]</scope>
    <source>
        <strain>ATCC 33912 / PCC 7942 / FACHB-805</strain>
    </source>
</reference>
<proteinExistence type="inferred from homology"/>
<dbReference type="EMBL" id="CP000100">
    <property type="protein sequence ID" value="ABB58328.1"/>
    <property type="molecule type" value="Genomic_DNA"/>
</dbReference>
<dbReference type="RefSeq" id="WP_011244112.1">
    <property type="nucleotide sequence ID" value="NZ_JACJTX010000001.1"/>
</dbReference>
<dbReference type="SMR" id="Q31KU1"/>
<dbReference type="STRING" id="1140.Synpcc7942_2298"/>
<dbReference type="PaxDb" id="1140-Synpcc7942_2298"/>
<dbReference type="GeneID" id="72431184"/>
<dbReference type="KEGG" id="syf:Synpcc7942_2298"/>
<dbReference type="eggNOG" id="COG0632">
    <property type="taxonomic scope" value="Bacteria"/>
</dbReference>
<dbReference type="HOGENOM" id="CLU_087936_0_0_3"/>
<dbReference type="OrthoDB" id="5293449at2"/>
<dbReference type="BioCyc" id="SYNEL:SYNPCC7942_2298-MONOMER"/>
<dbReference type="Proteomes" id="UP000889800">
    <property type="component" value="Chromosome"/>
</dbReference>
<dbReference type="GO" id="GO:0005737">
    <property type="term" value="C:cytoplasm"/>
    <property type="evidence" value="ECO:0007669"/>
    <property type="project" value="UniProtKB-SubCell"/>
</dbReference>
<dbReference type="GO" id="GO:0009379">
    <property type="term" value="C:Holliday junction helicase complex"/>
    <property type="evidence" value="ECO:0007669"/>
    <property type="project" value="InterPro"/>
</dbReference>
<dbReference type="GO" id="GO:0048476">
    <property type="term" value="C:Holliday junction resolvase complex"/>
    <property type="evidence" value="ECO:0007669"/>
    <property type="project" value="UniProtKB-UniRule"/>
</dbReference>
<dbReference type="GO" id="GO:0005524">
    <property type="term" value="F:ATP binding"/>
    <property type="evidence" value="ECO:0007669"/>
    <property type="project" value="InterPro"/>
</dbReference>
<dbReference type="GO" id="GO:0000400">
    <property type="term" value="F:four-way junction DNA binding"/>
    <property type="evidence" value="ECO:0007669"/>
    <property type="project" value="UniProtKB-UniRule"/>
</dbReference>
<dbReference type="GO" id="GO:0009378">
    <property type="term" value="F:four-way junction helicase activity"/>
    <property type="evidence" value="ECO:0007669"/>
    <property type="project" value="InterPro"/>
</dbReference>
<dbReference type="GO" id="GO:0006310">
    <property type="term" value="P:DNA recombination"/>
    <property type="evidence" value="ECO:0007669"/>
    <property type="project" value="UniProtKB-UniRule"/>
</dbReference>
<dbReference type="GO" id="GO:0006281">
    <property type="term" value="P:DNA repair"/>
    <property type="evidence" value="ECO:0007669"/>
    <property type="project" value="UniProtKB-UniRule"/>
</dbReference>
<dbReference type="CDD" id="cd14332">
    <property type="entry name" value="UBA_RuvA_C"/>
    <property type="match status" value="1"/>
</dbReference>
<dbReference type="Gene3D" id="1.10.150.20">
    <property type="entry name" value="5' to 3' exonuclease, C-terminal subdomain"/>
    <property type="match status" value="1"/>
</dbReference>
<dbReference type="Gene3D" id="2.40.50.140">
    <property type="entry name" value="Nucleic acid-binding proteins"/>
    <property type="match status" value="1"/>
</dbReference>
<dbReference type="HAMAP" id="MF_00031">
    <property type="entry name" value="DNA_HJ_migration_RuvA"/>
    <property type="match status" value="1"/>
</dbReference>
<dbReference type="InterPro" id="IPR013849">
    <property type="entry name" value="DNA_helicase_Holl-junc_RuvA_I"/>
</dbReference>
<dbReference type="InterPro" id="IPR003583">
    <property type="entry name" value="Hlx-hairpin-Hlx_DNA-bd_motif"/>
</dbReference>
<dbReference type="InterPro" id="IPR012340">
    <property type="entry name" value="NA-bd_OB-fold"/>
</dbReference>
<dbReference type="InterPro" id="IPR000085">
    <property type="entry name" value="RuvA"/>
</dbReference>
<dbReference type="InterPro" id="IPR010994">
    <property type="entry name" value="RuvA_2-like"/>
</dbReference>
<dbReference type="InterPro" id="IPR011114">
    <property type="entry name" value="RuvA_C"/>
</dbReference>
<dbReference type="InterPro" id="IPR036267">
    <property type="entry name" value="RuvA_C_sf"/>
</dbReference>
<dbReference type="NCBIfam" id="TIGR00084">
    <property type="entry name" value="ruvA"/>
    <property type="match status" value="1"/>
</dbReference>
<dbReference type="Pfam" id="PF14520">
    <property type="entry name" value="HHH_5"/>
    <property type="match status" value="1"/>
</dbReference>
<dbReference type="Pfam" id="PF07499">
    <property type="entry name" value="RuvA_C"/>
    <property type="match status" value="1"/>
</dbReference>
<dbReference type="Pfam" id="PF01330">
    <property type="entry name" value="RuvA_N"/>
    <property type="match status" value="1"/>
</dbReference>
<dbReference type="SMART" id="SM00278">
    <property type="entry name" value="HhH1"/>
    <property type="match status" value="2"/>
</dbReference>
<dbReference type="SUPFAM" id="SSF46929">
    <property type="entry name" value="DNA helicase RuvA subunit, C-terminal domain"/>
    <property type="match status" value="1"/>
</dbReference>
<dbReference type="SUPFAM" id="SSF50249">
    <property type="entry name" value="Nucleic acid-binding proteins"/>
    <property type="match status" value="1"/>
</dbReference>
<dbReference type="SUPFAM" id="SSF47781">
    <property type="entry name" value="RuvA domain 2-like"/>
    <property type="match status" value="1"/>
</dbReference>
<organism>
    <name type="scientific">Synechococcus elongatus (strain ATCC 33912 / PCC 7942 / FACHB-805)</name>
    <name type="common">Anacystis nidulans R2</name>
    <dbReference type="NCBI Taxonomy" id="1140"/>
    <lineage>
        <taxon>Bacteria</taxon>
        <taxon>Bacillati</taxon>
        <taxon>Cyanobacteriota</taxon>
        <taxon>Cyanophyceae</taxon>
        <taxon>Synechococcales</taxon>
        <taxon>Synechococcaceae</taxon>
        <taxon>Synechococcus</taxon>
    </lineage>
</organism>
<protein>
    <recommendedName>
        <fullName evidence="1">Holliday junction branch migration complex subunit RuvA</fullName>
    </recommendedName>
</protein>
<evidence type="ECO:0000255" key="1">
    <source>
        <dbReference type="HAMAP-Rule" id="MF_00031"/>
    </source>
</evidence>
<gene>
    <name evidence="1" type="primary">ruvA</name>
    <name type="ordered locus">Synpcc7942_2298</name>
</gene>
<comment type="function">
    <text evidence="1">The RuvA-RuvB-RuvC complex processes Holliday junction (HJ) DNA during genetic recombination and DNA repair, while the RuvA-RuvB complex plays an important role in the rescue of blocked DNA replication forks via replication fork reversal (RFR). RuvA specifically binds to HJ cruciform DNA, conferring on it an open structure. The RuvB hexamer acts as an ATP-dependent pump, pulling dsDNA into and through the RuvAB complex. HJ branch migration allows RuvC to scan DNA until it finds its consensus sequence, where it cleaves and resolves the cruciform DNA.</text>
</comment>
<comment type="subunit">
    <text evidence="1">Homotetramer. Forms an RuvA(8)-RuvB(12)-Holliday junction (HJ) complex. HJ DNA is sandwiched between 2 RuvA tetramers; dsDNA enters through RuvA and exits via RuvB. An RuvB hexamer assembles on each DNA strand where it exits the tetramer. Each RuvB hexamer is contacted by two RuvA subunits (via domain III) on 2 adjacent RuvB subunits; this complex drives branch migration. In the full resolvosome a probable DNA-RuvA(4)-RuvB(12)-RuvC(2) complex forms which resolves the HJ.</text>
</comment>
<comment type="subcellular location">
    <subcellularLocation>
        <location evidence="1">Cytoplasm</location>
    </subcellularLocation>
</comment>
<comment type="domain">
    <text evidence="1">Has three domains with a flexible linker between the domains II and III and assumes an 'L' shape. Domain III is highly mobile and contacts RuvB.</text>
</comment>
<comment type="similarity">
    <text evidence="1">Belongs to the RuvA family.</text>
</comment>
<accession>Q31KU1</accession>
<keyword id="KW-0963">Cytoplasm</keyword>
<keyword id="KW-0227">DNA damage</keyword>
<keyword id="KW-0233">DNA recombination</keyword>
<keyword id="KW-0234">DNA repair</keyword>
<keyword id="KW-0238">DNA-binding</keyword>
<keyword id="KW-1185">Reference proteome</keyword>
<name>RUVA_SYNE7</name>
<feature type="chain" id="PRO_1000002581" description="Holliday junction branch migration complex subunit RuvA">
    <location>
        <begin position="1"/>
        <end position="207"/>
    </location>
</feature>
<feature type="region of interest" description="Domain I" evidence="1">
    <location>
        <begin position="1"/>
        <end position="68"/>
    </location>
</feature>
<feature type="region of interest" description="Domain II" evidence="1">
    <location>
        <begin position="69"/>
        <end position="147"/>
    </location>
</feature>
<feature type="region of interest" description="Flexible linker" evidence="1">
    <location>
        <begin position="148"/>
        <end position="158"/>
    </location>
</feature>
<feature type="region of interest" description="Domain III" evidence="1">
    <location>
        <begin position="158"/>
        <end position="207"/>
    </location>
</feature>